<protein>
    <recommendedName>
        <fullName evidence="1">GTPase Der</fullName>
    </recommendedName>
    <alternativeName>
        <fullName evidence="1">GTP-binding protein EngA</fullName>
    </alternativeName>
</protein>
<organism>
    <name type="scientific">Nostoc punctiforme (strain ATCC 29133 / PCC 73102)</name>
    <dbReference type="NCBI Taxonomy" id="63737"/>
    <lineage>
        <taxon>Bacteria</taxon>
        <taxon>Bacillati</taxon>
        <taxon>Cyanobacteriota</taxon>
        <taxon>Cyanophyceae</taxon>
        <taxon>Nostocales</taxon>
        <taxon>Nostocaceae</taxon>
        <taxon>Nostoc</taxon>
    </lineage>
</organism>
<comment type="function">
    <text evidence="1">GTPase that plays an essential role in the late steps of ribosome biogenesis.</text>
</comment>
<comment type="subunit">
    <text evidence="1">Associates with the 50S ribosomal subunit.</text>
</comment>
<comment type="similarity">
    <text evidence="1">Belongs to the TRAFAC class TrmE-Era-EngA-EngB-Septin-like GTPase superfamily. EngA (Der) GTPase family.</text>
</comment>
<proteinExistence type="inferred from homology"/>
<reference key="1">
    <citation type="journal article" date="2013" name="Plant Physiol.">
        <title>A Nostoc punctiforme Sugar Transporter Necessary to Establish a Cyanobacterium-Plant Symbiosis.</title>
        <authorList>
            <person name="Ekman M."/>
            <person name="Picossi S."/>
            <person name="Campbell E.L."/>
            <person name="Meeks J.C."/>
            <person name="Flores E."/>
        </authorList>
    </citation>
    <scope>NUCLEOTIDE SEQUENCE [LARGE SCALE GENOMIC DNA]</scope>
    <source>
        <strain>ATCC 29133 / PCC 73102</strain>
    </source>
</reference>
<dbReference type="EMBL" id="CP001037">
    <property type="protein sequence ID" value="ACC80373.1"/>
    <property type="molecule type" value="Genomic_DNA"/>
</dbReference>
<dbReference type="RefSeq" id="WP_012408391.1">
    <property type="nucleotide sequence ID" value="NC_010628.1"/>
</dbReference>
<dbReference type="SMR" id="B2J1L2"/>
<dbReference type="STRING" id="63737.Npun_R1702"/>
<dbReference type="EnsemblBacteria" id="ACC80373">
    <property type="protein sequence ID" value="ACC80373"/>
    <property type="gene ID" value="Npun_R1702"/>
</dbReference>
<dbReference type="KEGG" id="npu:Npun_R1702"/>
<dbReference type="eggNOG" id="COG1160">
    <property type="taxonomic scope" value="Bacteria"/>
</dbReference>
<dbReference type="HOGENOM" id="CLU_016077_6_2_3"/>
<dbReference type="OrthoDB" id="9805918at2"/>
<dbReference type="PhylomeDB" id="B2J1L2"/>
<dbReference type="Proteomes" id="UP000001191">
    <property type="component" value="Chromosome"/>
</dbReference>
<dbReference type="GO" id="GO:0016887">
    <property type="term" value="F:ATP hydrolysis activity"/>
    <property type="evidence" value="ECO:0007669"/>
    <property type="project" value="InterPro"/>
</dbReference>
<dbReference type="GO" id="GO:0005525">
    <property type="term" value="F:GTP binding"/>
    <property type="evidence" value="ECO:0007669"/>
    <property type="project" value="UniProtKB-UniRule"/>
</dbReference>
<dbReference type="GO" id="GO:0043022">
    <property type="term" value="F:ribosome binding"/>
    <property type="evidence" value="ECO:0007669"/>
    <property type="project" value="TreeGrafter"/>
</dbReference>
<dbReference type="GO" id="GO:0042254">
    <property type="term" value="P:ribosome biogenesis"/>
    <property type="evidence" value="ECO:0007669"/>
    <property type="project" value="UniProtKB-KW"/>
</dbReference>
<dbReference type="CDD" id="cd01894">
    <property type="entry name" value="EngA1"/>
    <property type="match status" value="1"/>
</dbReference>
<dbReference type="CDD" id="cd01895">
    <property type="entry name" value="EngA2"/>
    <property type="match status" value="1"/>
</dbReference>
<dbReference type="FunFam" id="3.30.300.20:FF:000004">
    <property type="entry name" value="GTPase Der"/>
    <property type="match status" value="1"/>
</dbReference>
<dbReference type="FunFam" id="3.40.50.300:FF:000040">
    <property type="entry name" value="GTPase Der"/>
    <property type="match status" value="1"/>
</dbReference>
<dbReference type="FunFam" id="3.40.50.300:FF:001185">
    <property type="entry name" value="GTPase Der"/>
    <property type="match status" value="1"/>
</dbReference>
<dbReference type="Gene3D" id="3.30.300.20">
    <property type="match status" value="1"/>
</dbReference>
<dbReference type="Gene3D" id="3.40.50.300">
    <property type="entry name" value="P-loop containing nucleotide triphosphate hydrolases"/>
    <property type="match status" value="2"/>
</dbReference>
<dbReference type="HAMAP" id="MF_00195">
    <property type="entry name" value="GTPase_Der"/>
    <property type="match status" value="1"/>
</dbReference>
<dbReference type="InterPro" id="IPR003593">
    <property type="entry name" value="AAA+_ATPase"/>
</dbReference>
<dbReference type="InterPro" id="IPR031166">
    <property type="entry name" value="G_ENGA"/>
</dbReference>
<dbReference type="InterPro" id="IPR006073">
    <property type="entry name" value="GTP-bd"/>
</dbReference>
<dbReference type="InterPro" id="IPR016484">
    <property type="entry name" value="GTPase_Der"/>
</dbReference>
<dbReference type="InterPro" id="IPR032859">
    <property type="entry name" value="KH_dom-like"/>
</dbReference>
<dbReference type="InterPro" id="IPR015946">
    <property type="entry name" value="KH_dom-like_a/b"/>
</dbReference>
<dbReference type="InterPro" id="IPR027417">
    <property type="entry name" value="P-loop_NTPase"/>
</dbReference>
<dbReference type="InterPro" id="IPR005225">
    <property type="entry name" value="Small_GTP-bd"/>
</dbReference>
<dbReference type="NCBIfam" id="TIGR03594">
    <property type="entry name" value="GTPase_EngA"/>
    <property type="match status" value="1"/>
</dbReference>
<dbReference type="NCBIfam" id="TIGR00231">
    <property type="entry name" value="small_GTP"/>
    <property type="match status" value="2"/>
</dbReference>
<dbReference type="PANTHER" id="PTHR43834">
    <property type="entry name" value="GTPASE DER"/>
    <property type="match status" value="1"/>
</dbReference>
<dbReference type="PANTHER" id="PTHR43834:SF6">
    <property type="entry name" value="GTPASE DER"/>
    <property type="match status" value="1"/>
</dbReference>
<dbReference type="Pfam" id="PF14714">
    <property type="entry name" value="KH_dom-like"/>
    <property type="match status" value="1"/>
</dbReference>
<dbReference type="Pfam" id="PF01926">
    <property type="entry name" value="MMR_HSR1"/>
    <property type="match status" value="2"/>
</dbReference>
<dbReference type="PIRSF" id="PIRSF006485">
    <property type="entry name" value="GTP-binding_EngA"/>
    <property type="match status" value="1"/>
</dbReference>
<dbReference type="PRINTS" id="PR00326">
    <property type="entry name" value="GTP1OBG"/>
</dbReference>
<dbReference type="SMART" id="SM00382">
    <property type="entry name" value="AAA"/>
    <property type="match status" value="2"/>
</dbReference>
<dbReference type="SUPFAM" id="SSF52540">
    <property type="entry name" value="P-loop containing nucleoside triphosphate hydrolases"/>
    <property type="match status" value="2"/>
</dbReference>
<dbReference type="PROSITE" id="PS51712">
    <property type="entry name" value="G_ENGA"/>
    <property type="match status" value="2"/>
</dbReference>
<feature type="chain" id="PRO_1000099143" description="GTPase Der">
    <location>
        <begin position="1"/>
        <end position="456"/>
    </location>
</feature>
<feature type="domain" description="EngA-type G 1">
    <location>
        <begin position="4"/>
        <end position="169"/>
    </location>
</feature>
<feature type="domain" description="EngA-type G 2">
    <location>
        <begin position="177"/>
        <end position="352"/>
    </location>
</feature>
<feature type="domain" description="KH-like" evidence="1">
    <location>
        <begin position="353"/>
        <end position="438"/>
    </location>
</feature>
<feature type="binding site" evidence="1">
    <location>
        <begin position="10"/>
        <end position="17"/>
    </location>
    <ligand>
        <name>GTP</name>
        <dbReference type="ChEBI" id="CHEBI:37565"/>
        <label>1</label>
    </ligand>
</feature>
<feature type="binding site" evidence="1">
    <location>
        <begin position="57"/>
        <end position="61"/>
    </location>
    <ligand>
        <name>GTP</name>
        <dbReference type="ChEBI" id="CHEBI:37565"/>
        <label>1</label>
    </ligand>
</feature>
<feature type="binding site" evidence="1">
    <location>
        <begin position="120"/>
        <end position="123"/>
    </location>
    <ligand>
        <name>GTP</name>
        <dbReference type="ChEBI" id="CHEBI:37565"/>
        <label>1</label>
    </ligand>
</feature>
<feature type="binding site" evidence="1">
    <location>
        <begin position="183"/>
        <end position="190"/>
    </location>
    <ligand>
        <name>GTP</name>
        <dbReference type="ChEBI" id="CHEBI:37565"/>
        <label>2</label>
    </ligand>
</feature>
<feature type="binding site" evidence="1">
    <location>
        <begin position="230"/>
        <end position="234"/>
    </location>
    <ligand>
        <name>GTP</name>
        <dbReference type="ChEBI" id="CHEBI:37565"/>
        <label>2</label>
    </ligand>
</feature>
<feature type="binding site" evidence="1">
    <location>
        <begin position="295"/>
        <end position="298"/>
    </location>
    <ligand>
        <name>GTP</name>
        <dbReference type="ChEBI" id="CHEBI:37565"/>
        <label>2</label>
    </ligand>
</feature>
<name>DER_NOSP7</name>
<sequence length="456" mass="50763">MALPIVAIIGRPNVGKSTLVNRLAGEQTAIVHDEPGVTRDRTYMPAFWNGREFLVVDTGGLVFNDDTEFLPLIRQQAMTALAEACAAIFVVDGQTGPTSADQEIAEWMRQQRVPVLLAVNKCESPDQGLMQAAEFWELGLGEPYPISAIHGSGTGELLDELVNHIPAVEDIPETNEIKVAIVGRPNVGKSSLLNAFVGEERAIVSPISGTTRDAIDTVIERDGQTYRLIDTAGIRKKKHIEYGTEFFSINRAFKAIRRADVVLLVLDAVDGVTEQDQKLAGRIIEEGRACIIVVNKWDAVEKDSYTIYDYEKTLQSRLHFTEWAETIFVSALSGQRVEKILELVKTAAESHKRRVSTSVINEVLTDAVSWHSPPASRGGRQGKIYYGTQVSSQPPTIALFVNDSKRFNDNYRRYIERQFRQQLGFKGTPIILLWRSKKVRDAEIGNVNRATRVKLS</sequence>
<accession>B2J1L2</accession>
<keyword id="KW-0342">GTP-binding</keyword>
<keyword id="KW-0547">Nucleotide-binding</keyword>
<keyword id="KW-1185">Reference proteome</keyword>
<keyword id="KW-0677">Repeat</keyword>
<keyword id="KW-0690">Ribosome biogenesis</keyword>
<evidence type="ECO:0000255" key="1">
    <source>
        <dbReference type="HAMAP-Rule" id="MF_00195"/>
    </source>
</evidence>
<gene>
    <name evidence="1" type="primary">der</name>
    <name type="synonym">engA</name>
    <name type="ordered locus">Npun_R1702</name>
</gene>